<name>AIM14_YEAST</name>
<comment type="function">
    <text evidence="1">Probable cell surface metalloreductase. May be involved in iron or copper homeostasis (By similarity).</text>
</comment>
<comment type="subunit">
    <text>Interacts with ribosomes.</text>
</comment>
<comment type="subcellular location">
    <subcellularLocation>
        <location>Membrane</location>
        <topology>Multi-pass membrane protein</topology>
    </subcellularLocation>
</comment>
<comment type="disruption phenotype">
    <text evidence="4">Increases frequency of mitochondrial genome loss.</text>
</comment>
<comment type="similarity">
    <text evidence="5">Belongs to the ferric reductase (FRE) family. AIM14 subfamily.</text>
</comment>
<feature type="chain" id="PRO_0000202731" description="Probable metalloreductase AIM14">
    <location>
        <begin position="1"/>
        <end position="570"/>
    </location>
</feature>
<feature type="topological domain" description="Extracellular" evidence="2">
    <location>
        <begin position="1"/>
        <end position="20"/>
    </location>
</feature>
<feature type="transmembrane region" description="Helical" evidence="2">
    <location>
        <begin position="21"/>
        <end position="41"/>
    </location>
</feature>
<feature type="topological domain" description="Cytoplasmic" evidence="2">
    <location>
        <begin position="42"/>
        <end position="69"/>
    </location>
</feature>
<feature type="transmembrane region" description="Helical" evidence="2">
    <location>
        <begin position="70"/>
        <end position="90"/>
    </location>
</feature>
<feature type="topological domain" description="Extracellular" evidence="2">
    <location>
        <begin position="91"/>
        <end position="141"/>
    </location>
</feature>
<feature type="transmembrane region" description="Helical" evidence="2">
    <location>
        <begin position="142"/>
        <end position="162"/>
    </location>
</feature>
<feature type="topological domain" description="Cytoplasmic" evidence="2">
    <location>
        <begin position="163"/>
        <end position="176"/>
    </location>
</feature>
<feature type="transmembrane region" description="Helical" evidence="2">
    <location>
        <begin position="177"/>
        <end position="197"/>
    </location>
</feature>
<feature type="topological domain" description="Extracellular" evidence="2">
    <location>
        <begin position="198"/>
        <end position="373"/>
    </location>
</feature>
<feature type="transmembrane region" description="Helical" evidence="2">
    <location>
        <begin position="374"/>
        <end position="394"/>
    </location>
</feature>
<feature type="topological domain" description="Cytoplasmic" evidence="2">
    <location>
        <begin position="395"/>
        <end position="570"/>
    </location>
</feature>
<feature type="domain" description="Ferric oxidoreductase">
    <location>
        <begin position="101"/>
        <end position="219"/>
    </location>
</feature>
<feature type="domain" description="FAD-binding FR-type">
    <location>
        <begin position="250"/>
        <end position="388"/>
    </location>
</feature>
<feature type="region of interest" description="Disordered" evidence="3">
    <location>
        <begin position="480"/>
        <end position="509"/>
    </location>
</feature>
<feature type="compositionally biased region" description="Polar residues" evidence="3">
    <location>
        <begin position="480"/>
        <end position="505"/>
    </location>
</feature>
<evidence type="ECO:0000250" key="1"/>
<evidence type="ECO:0000255" key="2"/>
<evidence type="ECO:0000256" key="3">
    <source>
        <dbReference type="SAM" id="MobiDB-lite"/>
    </source>
</evidence>
<evidence type="ECO:0000269" key="4">
    <source>
    </source>
</evidence>
<evidence type="ECO:0000305" key="5"/>
<organism>
    <name type="scientific">Saccharomyces cerevisiae (strain ATCC 204508 / S288c)</name>
    <name type="common">Baker's yeast</name>
    <dbReference type="NCBI Taxonomy" id="559292"/>
    <lineage>
        <taxon>Eukaryota</taxon>
        <taxon>Fungi</taxon>
        <taxon>Dikarya</taxon>
        <taxon>Ascomycota</taxon>
        <taxon>Saccharomycotina</taxon>
        <taxon>Saccharomycetes</taxon>
        <taxon>Saccharomycetales</taxon>
        <taxon>Saccharomycetaceae</taxon>
        <taxon>Saccharomyces</taxon>
    </lineage>
</organism>
<keyword id="KW-0249">Electron transport</keyword>
<keyword id="KW-0274">FAD</keyword>
<keyword id="KW-0285">Flavoprotein</keyword>
<keyword id="KW-0406">Ion transport</keyword>
<keyword id="KW-0472">Membrane</keyword>
<keyword id="KW-0521">NADP</keyword>
<keyword id="KW-0560">Oxidoreductase</keyword>
<keyword id="KW-1185">Reference proteome</keyword>
<keyword id="KW-0812">Transmembrane</keyword>
<keyword id="KW-1133">Transmembrane helix</keyword>
<keyword id="KW-0813">Transport</keyword>
<protein>
    <recommendedName>
        <fullName>Probable metalloreductase AIM14</fullName>
        <ecNumber>1.16.1.-</ecNumber>
    </recommendedName>
    <alternativeName>
        <fullName>Altered inheritance of mitochondria protein 14</fullName>
    </alternativeName>
</protein>
<reference key="1">
    <citation type="journal article" date="1995" name="Yeast">
        <title>DNA sequence analysis of a 35 kb segment from Saccharomyces cerevisiae chromosome VII reveals 19 open reading frames including RAD54, ACE1/CUP2, PMR1, RCK1, AMS1 and CAL1/CDC43.</title>
        <authorList>
            <person name="James C.M."/>
            <person name="Indge K.J."/>
            <person name="Oliver S.G."/>
        </authorList>
    </citation>
    <scope>NUCLEOTIDE SEQUENCE [GENOMIC DNA]</scope>
</reference>
<reference key="2">
    <citation type="journal article" date="1997" name="Nature">
        <title>The nucleotide sequence of Saccharomyces cerevisiae chromosome VII.</title>
        <authorList>
            <person name="Tettelin H."/>
            <person name="Agostoni-Carbone M.L."/>
            <person name="Albermann K."/>
            <person name="Albers M."/>
            <person name="Arroyo J."/>
            <person name="Backes U."/>
            <person name="Barreiros T."/>
            <person name="Bertani I."/>
            <person name="Bjourson A.J."/>
            <person name="Brueckner M."/>
            <person name="Bruschi C.V."/>
            <person name="Carignani G."/>
            <person name="Castagnoli L."/>
            <person name="Cerdan E."/>
            <person name="Clemente M.L."/>
            <person name="Coblenz A."/>
            <person name="Coglievina M."/>
            <person name="Coissac E."/>
            <person name="Defoor E."/>
            <person name="Del Bino S."/>
            <person name="Delius H."/>
            <person name="Delneri D."/>
            <person name="de Wergifosse P."/>
            <person name="Dujon B."/>
            <person name="Durand P."/>
            <person name="Entian K.-D."/>
            <person name="Eraso P."/>
            <person name="Escribano V."/>
            <person name="Fabiani L."/>
            <person name="Fartmann B."/>
            <person name="Feroli F."/>
            <person name="Feuermann M."/>
            <person name="Frontali L."/>
            <person name="Garcia-Gonzalez M."/>
            <person name="Garcia-Saez M.I."/>
            <person name="Goffeau A."/>
            <person name="Guerreiro P."/>
            <person name="Hani J."/>
            <person name="Hansen M."/>
            <person name="Hebling U."/>
            <person name="Hernandez K."/>
            <person name="Heumann K."/>
            <person name="Hilger F."/>
            <person name="Hofmann B."/>
            <person name="Indge K.J."/>
            <person name="James C.M."/>
            <person name="Klima R."/>
            <person name="Koetter P."/>
            <person name="Kramer B."/>
            <person name="Kramer W."/>
            <person name="Lauquin G."/>
            <person name="Leuther H."/>
            <person name="Louis E.J."/>
            <person name="Maillier E."/>
            <person name="Marconi A."/>
            <person name="Martegani E."/>
            <person name="Mazon M.J."/>
            <person name="Mazzoni C."/>
            <person name="McReynolds A.D.K."/>
            <person name="Melchioretto P."/>
            <person name="Mewes H.-W."/>
            <person name="Minenkova O."/>
            <person name="Mueller-Auer S."/>
            <person name="Nawrocki A."/>
            <person name="Netter P."/>
            <person name="Neu R."/>
            <person name="Nombela C."/>
            <person name="Oliver S.G."/>
            <person name="Panzeri L."/>
            <person name="Paoluzi S."/>
            <person name="Plevani P."/>
            <person name="Portetelle D."/>
            <person name="Portillo F."/>
            <person name="Potier S."/>
            <person name="Purnelle B."/>
            <person name="Rieger M."/>
            <person name="Riles L."/>
            <person name="Rinaldi T."/>
            <person name="Robben J."/>
            <person name="Rodrigues-Pousada C."/>
            <person name="Rodriguez-Belmonte E."/>
            <person name="Rodriguez-Torres A.M."/>
            <person name="Rose M."/>
            <person name="Ruzzi M."/>
            <person name="Saliola M."/>
            <person name="Sanchez-Perez M."/>
            <person name="Schaefer B."/>
            <person name="Schaefer M."/>
            <person name="Scharfe M."/>
            <person name="Schmidheini T."/>
            <person name="Schreer A."/>
            <person name="Skala J."/>
            <person name="Souciet J.-L."/>
            <person name="Steensma H.Y."/>
            <person name="Talla E."/>
            <person name="Thierry A."/>
            <person name="Vandenbol M."/>
            <person name="van der Aart Q.J.M."/>
            <person name="Van Dyck L."/>
            <person name="Vanoni M."/>
            <person name="Verhasselt P."/>
            <person name="Voet M."/>
            <person name="Volckaert G."/>
            <person name="Wambutt R."/>
            <person name="Watson M.D."/>
            <person name="Weber N."/>
            <person name="Wedler E."/>
            <person name="Wedler H."/>
            <person name="Wipfli P."/>
            <person name="Wolf K."/>
            <person name="Wright L.F."/>
            <person name="Zaccaria P."/>
            <person name="Zimmermann M."/>
            <person name="Zollner A."/>
            <person name="Kleine K."/>
        </authorList>
    </citation>
    <scope>NUCLEOTIDE SEQUENCE [LARGE SCALE GENOMIC DNA]</scope>
    <source>
        <strain>ATCC 204508 / S288c</strain>
    </source>
</reference>
<reference key="3">
    <citation type="journal article" date="2014" name="G3 (Bethesda)">
        <title>The reference genome sequence of Saccharomyces cerevisiae: Then and now.</title>
        <authorList>
            <person name="Engel S.R."/>
            <person name="Dietrich F.S."/>
            <person name="Fisk D.G."/>
            <person name="Binkley G."/>
            <person name="Balakrishnan R."/>
            <person name="Costanzo M.C."/>
            <person name="Dwight S.S."/>
            <person name="Hitz B.C."/>
            <person name="Karra K."/>
            <person name="Nash R.S."/>
            <person name="Weng S."/>
            <person name="Wong E.D."/>
            <person name="Lloyd P."/>
            <person name="Skrzypek M.S."/>
            <person name="Miyasato S.R."/>
            <person name="Simison M."/>
            <person name="Cherry J.M."/>
        </authorList>
    </citation>
    <scope>GENOME REANNOTATION</scope>
    <source>
        <strain>ATCC 204508 / S288c</strain>
    </source>
</reference>
<reference key="4">
    <citation type="journal article" date="2006" name="Genes Dev.">
        <title>Systematic identification and functional screens of uncharacterized proteins associated with eukaryotic ribosomal complexes.</title>
        <authorList>
            <person name="Fleischer T.C."/>
            <person name="Weaver C.M."/>
            <person name="McAfee K.J."/>
            <person name="Jennings J.L."/>
            <person name="Link A.J."/>
        </authorList>
    </citation>
    <scope>COPURIFICATION WITH RIBOSOMAL COMPLEXES</scope>
    <scope>IDENTIFICATION BY MASS SPECTROMETRY</scope>
</reference>
<reference key="5">
    <citation type="journal article" date="2006" name="Proc. Natl. Acad. Sci. U.S.A.">
        <title>A global topology map of the Saccharomyces cerevisiae membrane proteome.</title>
        <authorList>
            <person name="Kim H."/>
            <person name="Melen K."/>
            <person name="Oesterberg M."/>
            <person name="von Heijne G."/>
        </authorList>
    </citation>
    <scope>TOPOLOGY [LARGE SCALE ANALYSIS]</scope>
    <source>
        <strain>ATCC 208353 / W303-1A</strain>
    </source>
</reference>
<reference key="6">
    <citation type="journal article" date="2009" name="PLoS Genet.">
        <title>Computationally driven, quantitative experiments discover genes required for mitochondrial biogenesis.</title>
        <authorList>
            <person name="Hess D.C."/>
            <person name="Myers C.L."/>
            <person name="Huttenhower C."/>
            <person name="Hibbs M.A."/>
            <person name="Hayes A.P."/>
            <person name="Paw J."/>
            <person name="Clore J.J."/>
            <person name="Mendoza R.M."/>
            <person name="Luis B.S."/>
            <person name="Nislow C."/>
            <person name="Giaever G."/>
            <person name="Costanzo M."/>
            <person name="Troyanskaya O.G."/>
            <person name="Caudy A.A."/>
        </authorList>
    </citation>
    <scope>DISRUPTION PHENOTYPE</scope>
</reference>
<reference key="7">
    <citation type="journal article" date="2012" name="Proc. Natl. Acad. Sci. U.S.A.">
        <title>N-terminal acetylome analyses and functional insights of the N-terminal acetyltransferase NatB.</title>
        <authorList>
            <person name="Van Damme P."/>
            <person name="Lasa M."/>
            <person name="Polevoda B."/>
            <person name="Gazquez C."/>
            <person name="Elosegui-Artola A."/>
            <person name="Kim D.S."/>
            <person name="De Juan-Pardo E."/>
            <person name="Demeyer K."/>
            <person name="Hole K."/>
            <person name="Larrea E."/>
            <person name="Timmerman E."/>
            <person name="Prieto J."/>
            <person name="Arnesen T."/>
            <person name="Sherman F."/>
            <person name="Gevaert K."/>
            <person name="Aldabe R."/>
        </authorList>
    </citation>
    <scope>IDENTIFICATION BY MASS SPECTROMETRY [LARGE SCALE ANALYSIS]</scope>
</reference>
<proteinExistence type="evidence at protein level"/>
<gene>
    <name type="primary">AIM14</name>
    <name type="ordered locus">YGL160W</name>
    <name type="ORF">G1837</name>
</gene>
<dbReference type="EC" id="1.16.1.-"/>
<dbReference type="EMBL" id="Z72682">
    <property type="protein sequence ID" value="CAA96872.1"/>
    <property type="molecule type" value="Genomic_DNA"/>
</dbReference>
<dbReference type="EMBL" id="BK006941">
    <property type="protein sequence ID" value="DAA07952.1"/>
    <property type="molecule type" value="Genomic_DNA"/>
</dbReference>
<dbReference type="PIR" id="S60426">
    <property type="entry name" value="S60426"/>
</dbReference>
<dbReference type="RefSeq" id="NP_011355.1">
    <property type="nucleotide sequence ID" value="NM_001181025.1"/>
</dbReference>
<dbReference type="BioGRID" id="33093">
    <property type="interactions" value="93"/>
</dbReference>
<dbReference type="FunCoup" id="P53109">
    <property type="interactions" value="31"/>
</dbReference>
<dbReference type="IntAct" id="P53109">
    <property type="interactions" value="31"/>
</dbReference>
<dbReference type="STRING" id="4932.YGL160W"/>
<dbReference type="iPTMnet" id="P53109"/>
<dbReference type="PaxDb" id="4932-YGL160W"/>
<dbReference type="PeptideAtlas" id="P53109"/>
<dbReference type="EnsemblFungi" id="YGL160W_mRNA">
    <property type="protein sequence ID" value="YGL160W"/>
    <property type="gene ID" value="YGL160W"/>
</dbReference>
<dbReference type="GeneID" id="852716"/>
<dbReference type="KEGG" id="sce:YGL160W"/>
<dbReference type="AGR" id="SGD:S000003128"/>
<dbReference type="SGD" id="S000003128">
    <property type="gene designation" value="AIM14"/>
</dbReference>
<dbReference type="VEuPathDB" id="FungiDB:YGL160W"/>
<dbReference type="eggNOG" id="KOG0039">
    <property type="taxonomic scope" value="Eukaryota"/>
</dbReference>
<dbReference type="HOGENOM" id="CLU_036508_0_0_1"/>
<dbReference type="InParanoid" id="P53109"/>
<dbReference type="OMA" id="GRMAYCL"/>
<dbReference type="OrthoDB" id="17725at2759"/>
<dbReference type="BioCyc" id="YEAST:G3O-30649-MONOMER"/>
<dbReference type="Reactome" id="R-SCE-209968">
    <property type="pathway name" value="Thyroxine biosynthesis"/>
</dbReference>
<dbReference type="Reactome" id="R-SCE-3299685">
    <property type="pathway name" value="Detoxification of Reactive Oxygen Species"/>
</dbReference>
<dbReference type="Reactome" id="R-SCE-6798695">
    <property type="pathway name" value="Neutrophil degranulation"/>
</dbReference>
<dbReference type="BioGRID-ORCS" id="852716">
    <property type="hits" value="0 hits in 10 CRISPR screens"/>
</dbReference>
<dbReference type="PRO" id="PR:P53109"/>
<dbReference type="Proteomes" id="UP000002311">
    <property type="component" value="Chromosome VII"/>
</dbReference>
<dbReference type="RNAct" id="P53109">
    <property type="molecule type" value="protein"/>
</dbReference>
<dbReference type="GO" id="GO:0005783">
    <property type="term" value="C:endoplasmic reticulum"/>
    <property type="evidence" value="ECO:0007005"/>
    <property type="project" value="SGD"/>
</dbReference>
<dbReference type="GO" id="GO:0097038">
    <property type="term" value="C:perinuclear endoplasmic reticulum"/>
    <property type="evidence" value="ECO:0000314"/>
    <property type="project" value="SGD"/>
</dbReference>
<dbReference type="GO" id="GO:0005886">
    <property type="term" value="C:plasma membrane"/>
    <property type="evidence" value="ECO:0000318"/>
    <property type="project" value="GO_Central"/>
</dbReference>
<dbReference type="GO" id="GO:0000293">
    <property type="term" value="F:ferric-chelate reductase activity"/>
    <property type="evidence" value="ECO:0000318"/>
    <property type="project" value="GO_Central"/>
</dbReference>
<dbReference type="GO" id="GO:0016175">
    <property type="term" value="F:superoxide-generating NAD(P)H oxidase activity"/>
    <property type="evidence" value="ECO:0000315"/>
    <property type="project" value="SGD"/>
</dbReference>
<dbReference type="GO" id="GO:0006915">
    <property type="term" value="P:apoptotic process"/>
    <property type="evidence" value="ECO:0000316"/>
    <property type="project" value="SGD"/>
</dbReference>
<dbReference type="GO" id="GO:0033215">
    <property type="term" value="P:reductive iron assimilation"/>
    <property type="evidence" value="ECO:0000318"/>
    <property type="project" value="GO_Central"/>
</dbReference>
<dbReference type="GO" id="GO:0032956">
    <property type="term" value="P:regulation of actin cytoskeleton organization"/>
    <property type="evidence" value="ECO:0000315"/>
    <property type="project" value="SGD"/>
</dbReference>
<dbReference type="CDD" id="cd06186">
    <property type="entry name" value="NOX_Duox_like_FAD_NADP"/>
    <property type="match status" value="1"/>
</dbReference>
<dbReference type="Gene3D" id="3.40.50.80">
    <property type="entry name" value="Nucleotide-binding domain of ferredoxin-NADP reductase (FNR) module"/>
    <property type="match status" value="1"/>
</dbReference>
<dbReference type="InterPro" id="IPR013112">
    <property type="entry name" value="FAD-bd_8"/>
</dbReference>
<dbReference type="InterPro" id="IPR013130">
    <property type="entry name" value="Fe3_Rdtase_TM_dom"/>
</dbReference>
<dbReference type="InterPro" id="IPR013121">
    <property type="entry name" value="Fe_red_NAD-bd_6"/>
</dbReference>
<dbReference type="InterPro" id="IPR039261">
    <property type="entry name" value="FNR_nucleotide-bd"/>
</dbReference>
<dbReference type="InterPro" id="IPR050369">
    <property type="entry name" value="RBOH/FRE"/>
</dbReference>
<dbReference type="PANTHER" id="PTHR11972:SF198">
    <property type="entry name" value="METALLOREDUCTASE AIM14-RELATED"/>
    <property type="match status" value="1"/>
</dbReference>
<dbReference type="PANTHER" id="PTHR11972">
    <property type="entry name" value="NADPH OXIDASE"/>
    <property type="match status" value="1"/>
</dbReference>
<dbReference type="Pfam" id="PF08022">
    <property type="entry name" value="FAD_binding_8"/>
    <property type="match status" value="1"/>
</dbReference>
<dbReference type="Pfam" id="PF01794">
    <property type="entry name" value="Ferric_reduct"/>
    <property type="match status" value="1"/>
</dbReference>
<dbReference type="Pfam" id="PF08030">
    <property type="entry name" value="NAD_binding_6"/>
    <property type="match status" value="1"/>
</dbReference>
<dbReference type="SFLD" id="SFLDF00463">
    <property type="entry name" value="AIM14"/>
    <property type="match status" value="1"/>
</dbReference>
<dbReference type="SFLD" id="SFLDS00052">
    <property type="entry name" value="Ferric_Reductase_Domain"/>
    <property type="match status" value="1"/>
</dbReference>
<dbReference type="SFLD" id="SFLDG01168">
    <property type="entry name" value="Ferric_reductase_subgroup_(FRE"/>
    <property type="match status" value="1"/>
</dbReference>
<sequence>MKESPLITLVKRHSETHFANIKYGYYVLIISLVYLIGLALLRAFGRRTPSRSSSAFKNKIIYRLYDIDPAIHLGILFFAVLIPFYYHYSLTTQSTVYLKRLGRLSYALIPLNLFLTLRPNWFLRKNCTYTDFIPFHKWFSRIITVIGLLHGIFFIIKWAIDDNVSLKQKLILKTFNFAGFIISILVLFLLICSIGPMRRYNYRLFYIVHNLVNVAFILLTPIHSRPGVKFPFLLLNCTLLFIHIINRIVFAKSLMILNKNANYSKTNLVHVRLPRAILPDYFEPGSHIRISPYRRINPLYWLLPSHPYTIASLAEDNSIDLIIKETSTAEPGSQIESLRSNPKSFHLDQEKTYTLINSYPPSVPEECYSQGTNIAIICGGSGISFALPLFRHFFNKENVKYLKMIWLIKDYSEYELVLDYLKTNGLTFEKKLSNNKRISVFISGEYTAETRLDEITTNIDDENSEYEMGSFNNEDEDLSISNFNSENADSNDNTPETSHSPTKENGSMIEVKSKHSFTLSNELKSFNNESAQVNQNETWLFSCGPPSLLQLSKKYCNDERINFVCETYGL</sequence>
<accession>P53109</accession>
<accession>D6VTZ1</accession>